<feature type="chain" id="PRO_0000440030" description="Cyanide hydratase">
    <location>
        <begin position="1"/>
        <end position="371"/>
    </location>
</feature>
<feature type="domain" description="CN hydrolase" evidence="2">
    <location>
        <begin position="8"/>
        <end position="286"/>
    </location>
</feature>
<feature type="region of interest" description="Disordered" evidence="3">
    <location>
        <begin position="326"/>
        <end position="356"/>
    </location>
</feature>
<feature type="active site" description="Proton acceptor" evidence="2">
    <location>
        <position position="48"/>
    </location>
</feature>
<feature type="active site" evidence="2">
    <location>
        <position position="130"/>
    </location>
</feature>
<feature type="active site" description="Nucleophile" evidence="2">
    <location>
        <position position="165"/>
    </location>
</feature>
<name>CHT_BOTF4</name>
<accession>G2XQT1</accession>
<accession>A0A0P1DJH4</accession>
<reference key="1">
    <citation type="journal article" date="2016" name="Appl. Microbiol. Biotechnol.">
        <title>Bringing nitrilase sequences from databases to life: the search for novel substrate specificities with a focus on dinitriles.</title>
        <authorList>
            <person name="Vesela A.B."/>
            <person name="Rucka L."/>
            <person name="Kaplan O."/>
            <person name="Pelantova H."/>
            <person name="Nesvera J."/>
            <person name="Patek M."/>
            <person name="Martinkova L."/>
        </authorList>
    </citation>
    <scope>NUCLEOTIDE SEQUENCE [GENOMIC DNA]</scope>
    <scope>FUNCTION</scope>
    <scope>CATALYTIC ACTIVITY</scope>
</reference>
<reference key="2">
    <citation type="journal article" date="2011" name="PLoS Genet.">
        <title>Genomic analysis of the necrotrophic fungal pathogens Sclerotinia sclerotiorum and Botrytis cinerea.</title>
        <authorList>
            <person name="Amselem J."/>
            <person name="Cuomo C.A."/>
            <person name="van Kan J.A.L."/>
            <person name="Viaud M."/>
            <person name="Benito E.P."/>
            <person name="Couloux A."/>
            <person name="Coutinho P.M."/>
            <person name="de Vries R.P."/>
            <person name="Dyer P.S."/>
            <person name="Fillinger S."/>
            <person name="Fournier E."/>
            <person name="Gout L."/>
            <person name="Hahn M."/>
            <person name="Kohn L."/>
            <person name="Lapalu N."/>
            <person name="Plummer K.M."/>
            <person name="Pradier J.-M."/>
            <person name="Quevillon E."/>
            <person name="Sharon A."/>
            <person name="Simon A."/>
            <person name="ten Have A."/>
            <person name="Tudzynski B."/>
            <person name="Tudzynski P."/>
            <person name="Wincker P."/>
            <person name="Andrew M."/>
            <person name="Anthouard V."/>
            <person name="Beever R.E."/>
            <person name="Beffa R."/>
            <person name="Benoit I."/>
            <person name="Bouzid O."/>
            <person name="Brault B."/>
            <person name="Chen Z."/>
            <person name="Choquer M."/>
            <person name="Collemare J."/>
            <person name="Cotton P."/>
            <person name="Danchin E.G."/>
            <person name="Da Silva C."/>
            <person name="Gautier A."/>
            <person name="Giraud C."/>
            <person name="Giraud T."/>
            <person name="Gonzalez C."/>
            <person name="Grossetete S."/>
            <person name="Gueldener U."/>
            <person name="Henrissat B."/>
            <person name="Howlett B.J."/>
            <person name="Kodira C."/>
            <person name="Kretschmer M."/>
            <person name="Lappartient A."/>
            <person name="Leroch M."/>
            <person name="Levis C."/>
            <person name="Mauceli E."/>
            <person name="Neuveglise C."/>
            <person name="Oeser B."/>
            <person name="Pearson M."/>
            <person name="Poulain J."/>
            <person name="Poussereau N."/>
            <person name="Quesneville H."/>
            <person name="Rascle C."/>
            <person name="Schumacher J."/>
            <person name="Segurens B."/>
            <person name="Sexton A."/>
            <person name="Silva E."/>
            <person name="Sirven C."/>
            <person name="Soanes D.M."/>
            <person name="Talbot N.J."/>
            <person name="Templeton M."/>
            <person name="Yandava C."/>
            <person name="Yarden O."/>
            <person name="Zeng Q."/>
            <person name="Rollins J.A."/>
            <person name="Lebrun M.-H."/>
            <person name="Dickman M."/>
        </authorList>
    </citation>
    <scope>NUCLEOTIDE SEQUENCE [LARGE SCALE GENOMIC DNA]</scope>
    <source>
        <strain>T4</strain>
    </source>
</reference>
<keyword id="KW-0378">Hydrolase</keyword>
<keyword id="KW-0456">Lyase</keyword>
<keyword id="KW-1185">Reference proteome</keyword>
<sequence length="371" mass="41446">MPAQIKKYKAAAVQAEPGWFDLELSVKKTIHWINEAGKAGCKLVAFPEVWIPGYPYWAWKVNYQQSLPMLKAYRENSLASDSDEMRRIREAARENAIYVSLGYSEIDFATLYISQVLISPTGEVLNHRRKIKPTHVEKLVYGDGAGDTFKSVVQTDIGRVGQLNCWENMNPFLKAMNVSEGEQVHIAGWPIYPHEETRTPLDPWTNTSNPNSDIVSPAYAIETATYVLAPFQRISKEGVDKCTPPGVEREDHNLYNGNSRIFGPDGQCLAKADEEFEGLMFVEIDLDQSHLPKALGDFGGHYMRPDLIRLLVDTRRKELITEADQDGGIGTYNTQDRVGLNRPLDAPKVDGPSGVSKQVLLSNAKKAAHKG</sequence>
<proteinExistence type="evidence at protein level"/>
<organism>
    <name type="scientific">Botryotinia fuckeliana (strain T4)</name>
    <name type="common">Noble rot fungus</name>
    <name type="synonym">Botrytis cinerea</name>
    <dbReference type="NCBI Taxonomy" id="999810"/>
    <lineage>
        <taxon>Eukaryota</taxon>
        <taxon>Fungi</taxon>
        <taxon>Dikarya</taxon>
        <taxon>Ascomycota</taxon>
        <taxon>Pezizomycotina</taxon>
        <taxon>Leotiomycetes</taxon>
        <taxon>Helotiales</taxon>
        <taxon>Sclerotiniaceae</taxon>
        <taxon>Botrytis</taxon>
    </lineage>
</organism>
<comment type="function">
    <text evidence="1 4">Catalyzes the hydration of cyanide to formamide. Degradation of cyanide may be important for plant pathogenic fungi in infection of cyanogenic plants (By similarity) (PubMed:26521240). Can also transform some nitriles like 2-cyanopyridine and fumaronitrile and has a minor activity with 4-cyanophenyl acetonitrile (4-CPA) (PubMed:26521240).</text>
</comment>
<comment type="catalytic activity">
    <reaction evidence="1 4">
        <text>formamide = hydrogen cyanide + H2O</text>
        <dbReference type="Rhea" id="RHEA:21720"/>
        <dbReference type="ChEBI" id="CHEBI:15377"/>
        <dbReference type="ChEBI" id="CHEBI:16397"/>
        <dbReference type="ChEBI" id="CHEBI:18407"/>
        <dbReference type="EC" id="4.2.1.66"/>
    </reaction>
</comment>
<comment type="subunit">
    <text evidence="1">Oligomer of dimers, forming left-handed helical fibers.</text>
</comment>
<comment type="induction">
    <text evidence="1">By cyanide.</text>
</comment>
<comment type="similarity">
    <text evidence="1">Belongs to the carbon-nitrogen hydrolase superfamily. Nitrilase family.</text>
</comment>
<dbReference type="EC" id="4.2.1.66" evidence="1 4"/>
<dbReference type="EMBL" id="LN875501">
    <property type="protein sequence ID" value="CTQ87267.1"/>
    <property type="molecule type" value="Genomic_DNA"/>
</dbReference>
<dbReference type="EMBL" id="FQ790253">
    <property type="protein sequence ID" value="CCD33618.1"/>
    <property type="molecule type" value="Genomic_DNA"/>
</dbReference>
<dbReference type="SMR" id="G2XQT1"/>
<dbReference type="STRING" id="999810.G2XQT1"/>
<dbReference type="eggNOG" id="KOG0805">
    <property type="taxonomic scope" value="Eukaryota"/>
</dbReference>
<dbReference type="HOGENOM" id="CLU_030130_6_0_1"/>
<dbReference type="InParanoid" id="G2XQT1"/>
<dbReference type="OrthoDB" id="38622at5178"/>
<dbReference type="Proteomes" id="UP000008177">
    <property type="component" value="Unplaced contigs"/>
</dbReference>
<dbReference type="GO" id="GO:0030196">
    <property type="term" value="F:cyanide hydratase activity"/>
    <property type="evidence" value="ECO:0007669"/>
    <property type="project" value="UniProtKB-UniRule"/>
</dbReference>
<dbReference type="GO" id="GO:0000257">
    <property type="term" value="F:nitrilase activity"/>
    <property type="evidence" value="ECO:0007669"/>
    <property type="project" value="UniProtKB-ARBA"/>
</dbReference>
<dbReference type="GO" id="GO:0019500">
    <property type="term" value="P:cyanide catabolic process"/>
    <property type="evidence" value="ECO:0007669"/>
    <property type="project" value="UniProtKB-UniRule"/>
</dbReference>
<dbReference type="CDD" id="cd07564">
    <property type="entry name" value="nitrilases_CHs"/>
    <property type="match status" value="1"/>
</dbReference>
<dbReference type="FunFam" id="3.60.110.10:FF:000011">
    <property type="entry name" value="Cyanide hydratase"/>
    <property type="match status" value="1"/>
</dbReference>
<dbReference type="Gene3D" id="3.60.110.10">
    <property type="entry name" value="Carbon-nitrogen hydrolase"/>
    <property type="match status" value="1"/>
</dbReference>
<dbReference type="HAMAP" id="MF_03224">
    <property type="entry name" value="CN_hydrolase"/>
    <property type="match status" value="1"/>
</dbReference>
<dbReference type="InterPro" id="IPR003010">
    <property type="entry name" value="C-N_Hydrolase"/>
</dbReference>
<dbReference type="InterPro" id="IPR036526">
    <property type="entry name" value="C-N_Hydrolase_sf"/>
</dbReference>
<dbReference type="InterPro" id="IPR037544">
    <property type="entry name" value="CN_hydrolase"/>
</dbReference>
<dbReference type="InterPro" id="IPR000132">
    <property type="entry name" value="Nitrilase/CN_hydratase_CS"/>
</dbReference>
<dbReference type="InterPro" id="IPR044149">
    <property type="entry name" value="Nitrilases_CHs"/>
</dbReference>
<dbReference type="PANTHER" id="PTHR46044:SF4">
    <property type="entry name" value="CYANIDE HYDRATASE"/>
    <property type="match status" value="1"/>
</dbReference>
<dbReference type="PANTHER" id="PTHR46044">
    <property type="entry name" value="NITRILASE"/>
    <property type="match status" value="1"/>
</dbReference>
<dbReference type="Pfam" id="PF00795">
    <property type="entry name" value="CN_hydrolase"/>
    <property type="match status" value="1"/>
</dbReference>
<dbReference type="SUPFAM" id="SSF56317">
    <property type="entry name" value="Carbon-nitrogen hydrolase"/>
    <property type="match status" value="1"/>
</dbReference>
<dbReference type="PROSITE" id="PS50263">
    <property type="entry name" value="CN_HYDROLASE"/>
    <property type="match status" value="1"/>
</dbReference>
<dbReference type="PROSITE" id="PS00920">
    <property type="entry name" value="NITRIL_CHT_1"/>
    <property type="match status" value="1"/>
</dbReference>
<dbReference type="PROSITE" id="PS00921">
    <property type="entry name" value="NITRIL_CHT_2"/>
    <property type="match status" value="1"/>
</dbReference>
<gene>
    <name evidence="5" type="primary">chy</name>
    <name type="ORF">BofuT4_P068340.1</name>
</gene>
<protein>
    <recommendedName>
        <fullName evidence="1 5">Cyanide hydratase</fullName>
        <shortName evidence="1 5">CHT</shortName>
        <ecNumber evidence="1 4">4.2.1.66</ecNumber>
    </recommendedName>
    <alternativeName>
        <fullName evidence="1">Cyanide-degrading nitrilase</fullName>
    </alternativeName>
    <alternativeName>
        <fullName evidence="1">Formamide hydrolyase</fullName>
    </alternativeName>
    <alternativeName>
        <fullName evidence="5">NitBf</fullName>
    </alternativeName>
</protein>
<evidence type="ECO:0000255" key="1">
    <source>
        <dbReference type="HAMAP-Rule" id="MF_03224"/>
    </source>
</evidence>
<evidence type="ECO:0000255" key="2">
    <source>
        <dbReference type="PROSITE-ProRule" id="PRU00054"/>
    </source>
</evidence>
<evidence type="ECO:0000256" key="3">
    <source>
        <dbReference type="SAM" id="MobiDB-lite"/>
    </source>
</evidence>
<evidence type="ECO:0000269" key="4">
    <source>
    </source>
</evidence>
<evidence type="ECO:0000303" key="5">
    <source>
    </source>
</evidence>